<protein>
    <recommendedName>
        <fullName evidence="2">Adenylosuccinate synthetase</fullName>
        <shortName evidence="2">AMPSase</shortName>
        <shortName evidence="2">AdSS</shortName>
        <ecNumber evidence="2">6.3.4.4</ecNumber>
    </recommendedName>
    <alternativeName>
        <fullName evidence="2">IMP--aspartate ligase</fullName>
    </alternativeName>
</protein>
<dbReference type="EC" id="6.3.4.4" evidence="2"/>
<dbReference type="EMBL" id="CH480842">
    <property type="protein sequence ID" value="EDW49612.1"/>
    <property type="molecule type" value="Genomic_DNA"/>
</dbReference>
<dbReference type="SMR" id="B4II68"/>
<dbReference type="STRING" id="7238.B4II68"/>
<dbReference type="EnsemblMetazoa" id="FBtr0206139">
    <property type="protein sequence ID" value="FBpp0204631"/>
    <property type="gene ID" value="FBgn0178022"/>
</dbReference>
<dbReference type="EnsemblMetazoa" id="XM_002043392.2">
    <property type="protein sequence ID" value="XP_002043428.1"/>
    <property type="gene ID" value="LOC6619207"/>
</dbReference>
<dbReference type="GeneID" id="6619207"/>
<dbReference type="KEGG" id="dse:6619207"/>
<dbReference type="HOGENOM" id="CLU_029848_3_0_1"/>
<dbReference type="OMA" id="QSYVRFL"/>
<dbReference type="OrthoDB" id="6621at7215"/>
<dbReference type="PhylomeDB" id="B4II68"/>
<dbReference type="UniPathway" id="UPA00075">
    <property type="reaction ID" value="UER00335"/>
</dbReference>
<dbReference type="Proteomes" id="UP000001292">
    <property type="component" value="Unassembled WGS sequence"/>
</dbReference>
<dbReference type="GO" id="GO:0005737">
    <property type="term" value="C:cytoplasm"/>
    <property type="evidence" value="ECO:0007669"/>
    <property type="project" value="UniProtKB-SubCell"/>
</dbReference>
<dbReference type="GO" id="GO:0004019">
    <property type="term" value="F:adenylosuccinate synthase activity"/>
    <property type="evidence" value="ECO:0007669"/>
    <property type="project" value="UniProtKB-UniRule"/>
</dbReference>
<dbReference type="GO" id="GO:0005525">
    <property type="term" value="F:GTP binding"/>
    <property type="evidence" value="ECO:0007669"/>
    <property type="project" value="UniProtKB-UniRule"/>
</dbReference>
<dbReference type="GO" id="GO:0000287">
    <property type="term" value="F:magnesium ion binding"/>
    <property type="evidence" value="ECO:0007669"/>
    <property type="project" value="UniProtKB-UniRule"/>
</dbReference>
<dbReference type="GO" id="GO:0044208">
    <property type="term" value="P:'de novo' AMP biosynthetic process"/>
    <property type="evidence" value="ECO:0007669"/>
    <property type="project" value="UniProtKB-UniRule"/>
</dbReference>
<dbReference type="GO" id="GO:0046040">
    <property type="term" value="P:IMP metabolic process"/>
    <property type="evidence" value="ECO:0007669"/>
    <property type="project" value="TreeGrafter"/>
</dbReference>
<dbReference type="CDD" id="cd03108">
    <property type="entry name" value="AdSS"/>
    <property type="match status" value="1"/>
</dbReference>
<dbReference type="FunFam" id="3.90.170.10:FF:000001">
    <property type="entry name" value="Adenylosuccinate synthetase"/>
    <property type="match status" value="1"/>
</dbReference>
<dbReference type="FunFam" id="1.10.300.10:FF:000002">
    <property type="entry name" value="Adenylosuccinate synthetase, chloroplastic"/>
    <property type="match status" value="1"/>
</dbReference>
<dbReference type="Gene3D" id="3.40.440.10">
    <property type="entry name" value="Adenylosuccinate Synthetase, subunit A, domain 1"/>
    <property type="match status" value="1"/>
</dbReference>
<dbReference type="Gene3D" id="1.10.300.10">
    <property type="entry name" value="Adenylosuccinate Synthetase, subunit A, domain 2"/>
    <property type="match status" value="1"/>
</dbReference>
<dbReference type="Gene3D" id="3.90.170.10">
    <property type="entry name" value="Adenylosuccinate Synthetase, subunit A, domain 3"/>
    <property type="match status" value="1"/>
</dbReference>
<dbReference type="HAMAP" id="MF_00011">
    <property type="entry name" value="Adenylosucc_synth"/>
    <property type="match status" value="1"/>
</dbReference>
<dbReference type="InterPro" id="IPR018220">
    <property type="entry name" value="Adenylosuccin_syn_GTP-bd"/>
</dbReference>
<dbReference type="InterPro" id="IPR033128">
    <property type="entry name" value="Adenylosuccin_syn_Lys_AS"/>
</dbReference>
<dbReference type="InterPro" id="IPR042109">
    <property type="entry name" value="Adenylosuccinate_synth_dom1"/>
</dbReference>
<dbReference type="InterPro" id="IPR042110">
    <property type="entry name" value="Adenylosuccinate_synth_dom2"/>
</dbReference>
<dbReference type="InterPro" id="IPR042111">
    <property type="entry name" value="Adenylosuccinate_synth_dom3"/>
</dbReference>
<dbReference type="InterPro" id="IPR001114">
    <property type="entry name" value="Adenylosuccinate_synthetase"/>
</dbReference>
<dbReference type="InterPro" id="IPR027417">
    <property type="entry name" value="P-loop_NTPase"/>
</dbReference>
<dbReference type="NCBIfam" id="NF002223">
    <property type="entry name" value="PRK01117.1"/>
    <property type="match status" value="1"/>
</dbReference>
<dbReference type="NCBIfam" id="TIGR00184">
    <property type="entry name" value="purA"/>
    <property type="match status" value="1"/>
</dbReference>
<dbReference type="PANTHER" id="PTHR11846">
    <property type="entry name" value="ADENYLOSUCCINATE SYNTHETASE"/>
    <property type="match status" value="1"/>
</dbReference>
<dbReference type="PANTHER" id="PTHR11846:SF0">
    <property type="entry name" value="ADENYLOSUCCINATE SYNTHETASE"/>
    <property type="match status" value="1"/>
</dbReference>
<dbReference type="Pfam" id="PF00709">
    <property type="entry name" value="Adenylsucc_synt"/>
    <property type="match status" value="1"/>
</dbReference>
<dbReference type="SMART" id="SM00788">
    <property type="entry name" value="Adenylsucc_synt"/>
    <property type="match status" value="1"/>
</dbReference>
<dbReference type="SUPFAM" id="SSF52540">
    <property type="entry name" value="P-loop containing nucleoside triphosphate hydrolases"/>
    <property type="match status" value="1"/>
</dbReference>
<dbReference type="PROSITE" id="PS01266">
    <property type="entry name" value="ADENYLOSUCCIN_SYN_1"/>
    <property type="match status" value="1"/>
</dbReference>
<dbReference type="PROSITE" id="PS00513">
    <property type="entry name" value="ADENYLOSUCCIN_SYN_2"/>
    <property type="match status" value="1"/>
</dbReference>
<reference key="1">
    <citation type="journal article" date="2007" name="Nature">
        <title>Evolution of genes and genomes on the Drosophila phylogeny.</title>
        <authorList>
            <consortium name="Drosophila 12 genomes consortium"/>
        </authorList>
    </citation>
    <scope>NUCLEOTIDE SEQUENCE [LARGE SCALE GENOMIC DNA]</scope>
    <source>
        <strain>Rob3c / Tucson 14021-0248.25</strain>
    </source>
</reference>
<comment type="function">
    <text evidence="1">Plays an important role in the de novo pathway and in the salvage pathway of purine nucleotide biosynthesis. Catalyzes the first committed step in the biosynthesis of AMP from IMP (By similarity).</text>
</comment>
<comment type="catalytic activity">
    <reaction evidence="2">
        <text>IMP + L-aspartate + GTP = N(6)-(1,2-dicarboxyethyl)-AMP + GDP + phosphate + 2 H(+)</text>
        <dbReference type="Rhea" id="RHEA:15753"/>
        <dbReference type="ChEBI" id="CHEBI:15378"/>
        <dbReference type="ChEBI" id="CHEBI:29991"/>
        <dbReference type="ChEBI" id="CHEBI:37565"/>
        <dbReference type="ChEBI" id="CHEBI:43474"/>
        <dbReference type="ChEBI" id="CHEBI:57567"/>
        <dbReference type="ChEBI" id="CHEBI:58053"/>
        <dbReference type="ChEBI" id="CHEBI:58189"/>
        <dbReference type="EC" id="6.3.4.4"/>
    </reaction>
</comment>
<comment type="cofactor">
    <cofactor evidence="2">
        <name>Mg(2+)</name>
        <dbReference type="ChEBI" id="CHEBI:18420"/>
    </cofactor>
    <text evidence="2">Binds 1 Mg(2+) ion per subunit.</text>
</comment>
<comment type="pathway">
    <text evidence="2">Purine metabolism; AMP biosynthesis via de novo pathway; AMP from IMP: step 1/2.</text>
</comment>
<comment type="subunit">
    <text evidence="2">Homodimer.</text>
</comment>
<comment type="subcellular location">
    <subcellularLocation>
        <location evidence="2">Cytoplasm</location>
    </subcellularLocation>
</comment>
<comment type="similarity">
    <text evidence="2">Belongs to the adenylosuccinate synthetase family.</text>
</comment>
<keyword id="KW-0963">Cytoplasm</keyword>
<keyword id="KW-0342">GTP-binding</keyword>
<keyword id="KW-0436">Ligase</keyword>
<keyword id="KW-0460">Magnesium</keyword>
<keyword id="KW-0479">Metal-binding</keyword>
<keyword id="KW-0547">Nucleotide-binding</keyword>
<keyword id="KW-0658">Purine biosynthesis</keyword>
<keyword id="KW-1185">Reference proteome</keyword>
<evidence type="ECO:0000250" key="1"/>
<evidence type="ECO:0000255" key="2">
    <source>
        <dbReference type="HAMAP-Rule" id="MF_03125"/>
    </source>
</evidence>
<accession>B4II68</accession>
<proteinExistence type="inferred from homology"/>
<organism>
    <name type="scientific">Drosophila sechellia</name>
    <name type="common">Fruit fly</name>
    <dbReference type="NCBI Taxonomy" id="7238"/>
    <lineage>
        <taxon>Eukaryota</taxon>
        <taxon>Metazoa</taxon>
        <taxon>Ecdysozoa</taxon>
        <taxon>Arthropoda</taxon>
        <taxon>Hexapoda</taxon>
        <taxon>Insecta</taxon>
        <taxon>Pterygota</taxon>
        <taxon>Neoptera</taxon>
        <taxon>Endopterygota</taxon>
        <taxon>Diptera</taxon>
        <taxon>Brachycera</taxon>
        <taxon>Muscomorpha</taxon>
        <taxon>Ephydroidea</taxon>
        <taxon>Drosophilidae</taxon>
        <taxon>Drosophila</taxon>
        <taxon>Sophophora</taxon>
    </lineage>
</organism>
<gene>
    <name type="ORF">GM23154</name>
</gene>
<sequence length="447" mass="48949">MSASATNGTHYEQLHQGRTKMYKSKVDVVLGAQWGDEGKGKVVDMLASDVDIVCRCQGGNNAGHTVVANGTEFDFHLLPSGVVNEKCVSVIGNGVVIHLPSLFDEVLKNEAKGLQHLENRLIISDRAHLVFDFHQHVDGMQEAEKGGKSLGTTKKGIGPAYSSKATRNGIRVGELLGDFNLFSEKFKSIVATHVRLFPSINVDVEAELARYKDYADKVRPYVKDTICFLHTALRNGKTILVEGANAAMLDIDFGTYPYVTSSNCSIGGVLTGLGLPPQTIGEVIGVVKAYTTRVGDGPFPTEQLNDIGDLLQTRGFEIGVTTKRKRRCGWLDIPLLKYTSLVNGYTCICLTKLDILDTLPEIKVAVAYKKPNGEKLDHFPGTIAELGNIEVEYAVLPGWQTSTEEVRNFKELPENAQSYVRFLESELSVPVRWVGVGKGRESIINVH</sequence>
<name>PURA_DROSE</name>
<feature type="chain" id="PRO_0000399264" description="Adenylosuccinate synthetase">
    <location>
        <begin position="1"/>
        <end position="447"/>
    </location>
</feature>
<feature type="active site" description="Proton acceptor" evidence="2">
    <location>
        <position position="36"/>
    </location>
</feature>
<feature type="active site" description="Proton donor" evidence="2">
    <location>
        <position position="64"/>
    </location>
</feature>
<feature type="binding site" evidence="2">
    <location>
        <begin position="35"/>
        <end position="41"/>
    </location>
    <ligand>
        <name>GTP</name>
        <dbReference type="ChEBI" id="CHEBI:37565"/>
    </ligand>
</feature>
<feature type="binding site" description="in other chain" evidence="2">
    <location>
        <begin position="36"/>
        <end position="39"/>
    </location>
    <ligand>
        <name>IMP</name>
        <dbReference type="ChEBI" id="CHEBI:58053"/>
        <note>ligand shared between dimeric partners</note>
    </ligand>
</feature>
<feature type="binding site" evidence="2">
    <location>
        <position position="36"/>
    </location>
    <ligand>
        <name>Mg(2+)</name>
        <dbReference type="ChEBI" id="CHEBI:18420"/>
    </ligand>
</feature>
<feature type="binding site" description="in other chain" evidence="2">
    <location>
        <begin position="61"/>
        <end position="64"/>
    </location>
    <ligand>
        <name>IMP</name>
        <dbReference type="ChEBI" id="CHEBI:58053"/>
        <note>ligand shared between dimeric partners</note>
    </ligand>
</feature>
<feature type="binding site" evidence="2">
    <location>
        <begin position="63"/>
        <end position="65"/>
    </location>
    <ligand>
        <name>GTP</name>
        <dbReference type="ChEBI" id="CHEBI:37565"/>
    </ligand>
</feature>
<feature type="binding site" evidence="2">
    <location>
        <position position="63"/>
    </location>
    <ligand>
        <name>Mg(2+)</name>
        <dbReference type="ChEBI" id="CHEBI:18420"/>
    </ligand>
</feature>
<feature type="binding site" description="in other chain" evidence="2">
    <location>
        <position position="153"/>
    </location>
    <ligand>
        <name>IMP</name>
        <dbReference type="ChEBI" id="CHEBI:58053"/>
        <note>ligand shared between dimeric partners</note>
    </ligand>
</feature>
<feature type="binding site" evidence="2">
    <location>
        <position position="167"/>
    </location>
    <ligand>
        <name>IMP</name>
        <dbReference type="ChEBI" id="CHEBI:58053"/>
        <note>ligand shared between dimeric partners</note>
    </ligand>
</feature>
<feature type="binding site" description="in other chain" evidence="2">
    <location>
        <position position="245"/>
    </location>
    <ligand>
        <name>IMP</name>
        <dbReference type="ChEBI" id="CHEBI:58053"/>
        <note>ligand shared between dimeric partners</note>
    </ligand>
</feature>
<feature type="binding site" description="in other chain" evidence="2">
    <location>
        <position position="260"/>
    </location>
    <ligand>
        <name>IMP</name>
        <dbReference type="ChEBI" id="CHEBI:58053"/>
        <note>ligand shared between dimeric partners</note>
    </ligand>
</feature>
<feature type="binding site" evidence="2">
    <location>
        <begin position="320"/>
        <end position="326"/>
    </location>
    <ligand>
        <name>substrate</name>
    </ligand>
</feature>
<feature type="binding site" description="in other chain" evidence="2">
    <location>
        <position position="324"/>
    </location>
    <ligand>
        <name>IMP</name>
        <dbReference type="ChEBI" id="CHEBI:58053"/>
        <note>ligand shared between dimeric partners</note>
    </ligand>
</feature>
<feature type="binding site" evidence="2">
    <location>
        <position position="326"/>
    </location>
    <ligand>
        <name>GTP</name>
        <dbReference type="ChEBI" id="CHEBI:37565"/>
    </ligand>
</feature>
<feature type="binding site" evidence="2">
    <location>
        <begin position="352"/>
        <end position="354"/>
    </location>
    <ligand>
        <name>GTP</name>
        <dbReference type="ChEBI" id="CHEBI:37565"/>
    </ligand>
</feature>
<feature type="binding site" evidence="2">
    <location>
        <begin position="435"/>
        <end position="437"/>
    </location>
    <ligand>
        <name>GTP</name>
        <dbReference type="ChEBI" id="CHEBI:37565"/>
    </ligand>
</feature>